<gene>
    <name evidence="1" type="primary">pheS</name>
    <name type="ordered locus">SUN_0546</name>
</gene>
<sequence>MENLEAKILEADSLEVLEKVRIELFGKKGLLAAQFAKMKDIPGPEKKAFAEGLNKQKTALQEAFDARYEVLKAEEIEKMLKSEAIDISLYGAVAEKGALHPVMETMDKIIDYFVALNFAVETGPMVEDDFHNFEALNLPKYHPARDMQDTFYFKDSGLLRTHTSPVQIRTMLETKPPIRMIAPGSVFRRDYDLTHTPMFHQVEGLVVDEKGKVSFANLKAILTDFLQYMFGDVEVRFRPSFFPFTEPSAEVDISCIFCEGKGCRVCSHTGWLEVLGCGIVDPNVFKAVGYEDVSGYAFGLGVERFAMLMHKIPDLRSLFEGDIRLLEQFR</sequence>
<accession>A6Q7P7</accession>
<keyword id="KW-0030">Aminoacyl-tRNA synthetase</keyword>
<keyword id="KW-0067">ATP-binding</keyword>
<keyword id="KW-0963">Cytoplasm</keyword>
<keyword id="KW-0436">Ligase</keyword>
<keyword id="KW-0460">Magnesium</keyword>
<keyword id="KW-0479">Metal-binding</keyword>
<keyword id="KW-0547">Nucleotide-binding</keyword>
<keyword id="KW-0648">Protein biosynthesis</keyword>
<dbReference type="EC" id="6.1.1.20" evidence="1"/>
<dbReference type="EMBL" id="AP009179">
    <property type="protein sequence ID" value="BAF71506.1"/>
    <property type="molecule type" value="Genomic_DNA"/>
</dbReference>
<dbReference type="RefSeq" id="WP_011980239.1">
    <property type="nucleotide sequence ID" value="NC_009663.1"/>
</dbReference>
<dbReference type="SMR" id="A6Q7P7"/>
<dbReference type="STRING" id="387093.SUN_0546"/>
<dbReference type="KEGG" id="sun:SUN_0546"/>
<dbReference type="eggNOG" id="COG0016">
    <property type="taxonomic scope" value="Bacteria"/>
</dbReference>
<dbReference type="HOGENOM" id="CLU_025086_0_1_7"/>
<dbReference type="OrthoDB" id="9800719at2"/>
<dbReference type="Proteomes" id="UP000006378">
    <property type="component" value="Chromosome"/>
</dbReference>
<dbReference type="GO" id="GO:0005737">
    <property type="term" value="C:cytoplasm"/>
    <property type="evidence" value="ECO:0007669"/>
    <property type="project" value="UniProtKB-SubCell"/>
</dbReference>
<dbReference type="GO" id="GO:0005524">
    <property type="term" value="F:ATP binding"/>
    <property type="evidence" value="ECO:0007669"/>
    <property type="project" value="UniProtKB-UniRule"/>
</dbReference>
<dbReference type="GO" id="GO:0000287">
    <property type="term" value="F:magnesium ion binding"/>
    <property type="evidence" value="ECO:0007669"/>
    <property type="project" value="UniProtKB-UniRule"/>
</dbReference>
<dbReference type="GO" id="GO:0004826">
    <property type="term" value="F:phenylalanine-tRNA ligase activity"/>
    <property type="evidence" value="ECO:0007669"/>
    <property type="project" value="UniProtKB-UniRule"/>
</dbReference>
<dbReference type="GO" id="GO:0000049">
    <property type="term" value="F:tRNA binding"/>
    <property type="evidence" value="ECO:0007669"/>
    <property type="project" value="InterPro"/>
</dbReference>
<dbReference type="GO" id="GO:0006432">
    <property type="term" value="P:phenylalanyl-tRNA aminoacylation"/>
    <property type="evidence" value="ECO:0007669"/>
    <property type="project" value="UniProtKB-UniRule"/>
</dbReference>
<dbReference type="CDD" id="cd00496">
    <property type="entry name" value="PheRS_alpha_core"/>
    <property type="match status" value="1"/>
</dbReference>
<dbReference type="Gene3D" id="3.30.930.10">
    <property type="entry name" value="Bira Bifunctional Protein, Domain 2"/>
    <property type="match status" value="1"/>
</dbReference>
<dbReference type="HAMAP" id="MF_00281">
    <property type="entry name" value="Phe_tRNA_synth_alpha1"/>
    <property type="match status" value="1"/>
</dbReference>
<dbReference type="InterPro" id="IPR006195">
    <property type="entry name" value="aa-tRNA-synth_II"/>
</dbReference>
<dbReference type="InterPro" id="IPR045864">
    <property type="entry name" value="aa-tRNA-synth_II/BPL/LPL"/>
</dbReference>
<dbReference type="InterPro" id="IPR004529">
    <property type="entry name" value="Phe-tRNA-synth_IIc_asu"/>
</dbReference>
<dbReference type="InterPro" id="IPR004188">
    <property type="entry name" value="Phe-tRNA_ligase_II_N"/>
</dbReference>
<dbReference type="InterPro" id="IPR022911">
    <property type="entry name" value="Phe_tRNA_ligase_alpha1_bac"/>
</dbReference>
<dbReference type="InterPro" id="IPR002319">
    <property type="entry name" value="Phenylalanyl-tRNA_Synthase"/>
</dbReference>
<dbReference type="InterPro" id="IPR010978">
    <property type="entry name" value="tRNA-bd_arm"/>
</dbReference>
<dbReference type="NCBIfam" id="TIGR00468">
    <property type="entry name" value="pheS"/>
    <property type="match status" value="1"/>
</dbReference>
<dbReference type="PANTHER" id="PTHR11538:SF41">
    <property type="entry name" value="PHENYLALANINE--TRNA LIGASE, MITOCHONDRIAL"/>
    <property type="match status" value="1"/>
</dbReference>
<dbReference type="PANTHER" id="PTHR11538">
    <property type="entry name" value="PHENYLALANYL-TRNA SYNTHETASE"/>
    <property type="match status" value="1"/>
</dbReference>
<dbReference type="Pfam" id="PF02912">
    <property type="entry name" value="Phe_tRNA-synt_N"/>
    <property type="match status" value="1"/>
</dbReference>
<dbReference type="Pfam" id="PF01409">
    <property type="entry name" value="tRNA-synt_2d"/>
    <property type="match status" value="1"/>
</dbReference>
<dbReference type="SUPFAM" id="SSF55681">
    <property type="entry name" value="Class II aaRS and biotin synthetases"/>
    <property type="match status" value="1"/>
</dbReference>
<dbReference type="SUPFAM" id="SSF46589">
    <property type="entry name" value="tRNA-binding arm"/>
    <property type="match status" value="1"/>
</dbReference>
<dbReference type="PROSITE" id="PS50862">
    <property type="entry name" value="AA_TRNA_LIGASE_II"/>
    <property type="match status" value="1"/>
</dbReference>
<name>SYFA_SULNB</name>
<proteinExistence type="inferred from homology"/>
<evidence type="ECO:0000255" key="1">
    <source>
        <dbReference type="HAMAP-Rule" id="MF_00281"/>
    </source>
</evidence>
<reference key="1">
    <citation type="journal article" date="2007" name="Proc. Natl. Acad. Sci. U.S.A.">
        <title>Deep-sea vent epsilon-proteobacterial genomes provide insights into emergence of pathogens.</title>
        <authorList>
            <person name="Nakagawa S."/>
            <person name="Takaki Y."/>
            <person name="Shimamura S."/>
            <person name="Reysenbach A.-L."/>
            <person name="Takai K."/>
            <person name="Horikoshi K."/>
        </authorList>
    </citation>
    <scope>NUCLEOTIDE SEQUENCE [LARGE SCALE GENOMIC DNA]</scope>
    <source>
        <strain>NBC37-1</strain>
    </source>
</reference>
<comment type="catalytic activity">
    <reaction evidence="1">
        <text>tRNA(Phe) + L-phenylalanine + ATP = L-phenylalanyl-tRNA(Phe) + AMP + diphosphate + H(+)</text>
        <dbReference type="Rhea" id="RHEA:19413"/>
        <dbReference type="Rhea" id="RHEA-COMP:9668"/>
        <dbReference type="Rhea" id="RHEA-COMP:9699"/>
        <dbReference type="ChEBI" id="CHEBI:15378"/>
        <dbReference type="ChEBI" id="CHEBI:30616"/>
        <dbReference type="ChEBI" id="CHEBI:33019"/>
        <dbReference type="ChEBI" id="CHEBI:58095"/>
        <dbReference type="ChEBI" id="CHEBI:78442"/>
        <dbReference type="ChEBI" id="CHEBI:78531"/>
        <dbReference type="ChEBI" id="CHEBI:456215"/>
        <dbReference type="EC" id="6.1.1.20"/>
    </reaction>
</comment>
<comment type="cofactor">
    <cofactor evidence="1">
        <name>Mg(2+)</name>
        <dbReference type="ChEBI" id="CHEBI:18420"/>
    </cofactor>
    <text evidence="1">Binds 2 magnesium ions per tetramer.</text>
</comment>
<comment type="subunit">
    <text evidence="1">Tetramer of two alpha and two beta subunits.</text>
</comment>
<comment type="subcellular location">
    <subcellularLocation>
        <location evidence="1">Cytoplasm</location>
    </subcellularLocation>
</comment>
<comment type="similarity">
    <text evidence="1">Belongs to the class-II aminoacyl-tRNA synthetase family. Phe-tRNA synthetase alpha subunit type 1 subfamily.</text>
</comment>
<organism>
    <name type="scientific">Sulfurovum sp. (strain NBC37-1)</name>
    <dbReference type="NCBI Taxonomy" id="387093"/>
    <lineage>
        <taxon>Bacteria</taxon>
        <taxon>Pseudomonadati</taxon>
        <taxon>Campylobacterota</taxon>
        <taxon>Epsilonproteobacteria</taxon>
        <taxon>Campylobacterales</taxon>
        <taxon>Sulfurovaceae</taxon>
        <taxon>Sulfurovum</taxon>
    </lineage>
</organism>
<feature type="chain" id="PRO_1000006910" description="Phenylalanine--tRNA ligase alpha subunit">
    <location>
        <begin position="1"/>
        <end position="330"/>
    </location>
</feature>
<feature type="binding site" evidence="1">
    <location>
        <position position="246"/>
    </location>
    <ligand>
        <name>Mg(2+)</name>
        <dbReference type="ChEBI" id="CHEBI:18420"/>
        <note>shared with beta subunit</note>
    </ligand>
</feature>
<protein>
    <recommendedName>
        <fullName evidence="1">Phenylalanine--tRNA ligase alpha subunit</fullName>
        <ecNumber evidence="1">6.1.1.20</ecNumber>
    </recommendedName>
    <alternativeName>
        <fullName evidence="1">Phenylalanyl-tRNA synthetase alpha subunit</fullName>
        <shortName evidence="1">PheRS</shortName>
    </alternativeName>
</protein>